<accession>Q4WGL2</accession>
<dbReference type="EMBL" id="AAHF01000009">
    <property type="protein sequence ID" value="EAL86929.1"/>
    <property type="molecule type" value="Genomic_DNA"/>
</dbReference>
<dbReference type="RefSeq" id="XP_748967.1">
    <property type="nucleotide sequence ID" value="XM_743874.1"/>
</dbReference>
<dbReference type="SMR" id="Q4WGL2"/>
<dbReference type="STRING" id="330879.Q4WGL2"/>
<dbReference type="EnsemblFungi" id="EAL86929">
    <property type="protein sequence ID" value="EAL86929"/>
    <property type="gene ID" value="AFUA_7G05420"/>
</dbReference>
<dbReference type="GeneID" id="3506243"/>
<dbReference type="KEGG" id="afm:AFUA_7G05420"/>
<dbReference type="VEuPathDB" id="FungiDB:Afu7g05420"/>
<dbReference type="eggNOG" id="KOG4149">
    <property type="taxonomic scope" value="Eukaryota"/>
</dbReference>
<dbReference type="HOGENOM" id="CLU_054990_0_0_1"/>
<dbReference type="InParanoid" id="Q4WGL2"/>
<dbReference type="OMA" id="PRSWKNT"/>
<dbReference type="OrthoDB" id="7481291at2759"/>
<dbReference type="Proteomes" id="UP000002530">
    <property type="component" value="Chromosome 7"/>
</dbReference>
<dbReference type="GO" id="GO:0005743">
    <property type="term" value="C:mitochondrial inner membrane"/>
    <property type="evidence" value="ECO:0007669"/>
    <property type="project" value="UniProtKB-SubCell"/>
</dbReference>
<dbReference type="GO" id="GO:0005758">
    <property type="term" value="C:mitochondrial intermembrane space"/>
    <property type="evidence" value="ECO:0000318"/>
    <property type="project" value="GO_Central"/>
</dbReference>
<dbReference type="GO" id="GO:0015035">
    <property type="term" value="F:protein-disulfide reductase activity"/>
    <property type="evidence" value="ECO:0000318"/>
    <property type="project" value="GO_Central"/>
</dbReference>
<dbReference type="GO" id="GO:0045041">
    <property type="term" value="P:protein import into mitochondrial intermembrane space"/>
    <property type="evidence" value="ECO:0000318"/>
    <property type="project" value="GO_Central"/>
</dbReference>
<dbReference type="FunFam" id="1.10.287.2900:FF:000002">
    <property type="entry name" value="Mitochondrial intermembrane space import and assembly protein"/>
    <property type="match status" value="1"/>
</dbReference>
<dbReference type="Gene3D" id="1.10.287.2900">
    <property type="match status" value="1"/>
</dbReference>
<dbReference type="InterPro" id="IPR010625">
    <property type="entry name" value="CHCH"/>
</dbReference>
<dbReference type="InterPro" id="IPR039289">
    <property type="entry name" value="CHCHD4"/>
</dbReference>
<dbReference type="PANTHER" id="PTHR21622">
    <property type="entry name" value="COILED-COIL-HELIX-COILED-COIL-HELIX DOMAIN CONTAINING 4"/>
    <property type="match status" value="1"/>
</dbReference>
<dbReference type="PANTHER" id="PTHR21622:SF0">
    <property type="entry name" value="COILED-COIL-HELIX-COILED-COIL-HELIX DOMAIN CONTAINING 4"/>
    <property type="match status" value="1"/>
</dbReference>
<dbReference type="Pfam" id="PF06747">
    <property type="entry name" value="CHCH"/>
    <property type="match status" value="1"/>
</dbReference>
<dbReference type="PROSITE" id="PS51808">
    <property type="entry name" value="CHCH"/>
    <property type="match status" value="1"/>
</dbReference>
<comment type="function">
    <text evidence="1">Required for the import and folding of small cysteine-containing proteins (small Tim) in the mitochondrial intermembrane space (IMS). Forms a redox cycle with ERV1 that involves a disulfide relay system. Precursor proteins to be imported into the IMS are translocated in their reduced form into the mitochondria. The oxidized form of MIA40 forms a transient intermolecular disulfide bridge with the reduced precursor protein, resulting in oxidation of the precursor protein that now contains an intramolecular disulfide bond and is able to undergo folding in the IMS (By similarity).</text>
</comment>
<comment type="cofactor">
    <cofactor evidence="1">
        <name>Cu(2+)</name>
        <dbReference type="ChEBI" id="CHEBI:29036"/>
    </cofactor>
    <cofactor evidence="1">
        <name>Zn(2+)</name>
        <dbReference type="ChEBI" id="CHEBI:29105"/>
    </cofactor>
    <text evidence="1">Cu(2+) or Zn(2+).</text>
</comment>
<comment type="subunit">
    <text evidence="1">Monomer.</text>
</comment>
<comment type="subcellular location">
    <subcellularLocation>
        <location evidence="1">Mitochondrion inner membrane</location>
        <topology evidence="1">Single-pass type II membrane protein</topology>
        <orientation evidence="1">Intermembrane side</orientation>
    </subcellularLocation>
</comment>
<comment type="domain">
    <text evidence="1">The CHCH domain contains a conserved twin Cys-X(9)-Cys motif which is required for import and stability of MIA40 in mitochondria.</text>
</comment>
<gene>
    <name type="primary">mia40</name>
    <name type="synonym">tim40</name>
    <name type="ORF">AFUA_7G05420</name>
</gene>
<organism>
    <name type="scientific">Aspergillus fumigatus (strain ATCC MYA-4609 / CBS 101355 / FGSC A1100 / Af293)</name>
    <name type="common">Neosartorya fumigata</name>
    <dbReference type="NCBI Taxonomy" id="330879"/>
    <lineage>
        <taxon>Eukaryota</taxon>
        <taxon>Fungi</taxon>
        <taxon>Dikarya</taxon>
        <taxon>Ascomycota</taxon>
        <taxon>Pezizomycotina</taxon>
        <taxon>Eurotiomycetes</taxon>
        <taxon>Eurotiomycetidae</taxon>
        <taxon>Eurotiales</taxon>
        <taxon>Aspergillaceae</taxon>
        <taxon>Aspergillus</taxon>
        <taxon>Aspergillus subgen. Fumigati</taxon>
    </lineage>
</organism>
<name>MIA40_ASPFU</name>
<proteinExistence type="inferred from homology"/>
<reference key="1">
    <citation type="journal article" date="2005" name="Nature">
        <title>Genomic sequence of the pathogenic and allergenic filamentous fungus Aspergillus fumigatus.</title>
        <authorList>
            <person name="Nierman W.C."/>
            <person name="Pain A."/>
            <person name="Anderson M.J."/>
            <person name="Wortman J.R."/>
            <person name="Kim H.S."/>
            <person name="Arroyo J."/>
            <person name="Berriman M."/>
            <person name="Abe K."/>
            <person name="Archer D.B."/>
            <person name="Bermejo C."/>
            <person name="Bennett J.W."/>
            <person name="Bowyer P."/>
            <person name="Chen D."/>
            <person name="Collins M."/>
            <person name="Coulsen R."/>
            <person name="Davies R."/>
            <person name="Dyer P.S."/>
            <person name="Farman M.L."/>
            <person name="Fedorova N."/>
            <person name="Fedorova N.D."/>
            <person name="Feldblyum T.V."/>
            <person name="Fischer R."/>
            <person name="Fosker N."/>
            <person name="Fraser A."/>
            <person name="Garcia J.L."/>
            <person name="Garcia M.J."/>
            <person name="Goble A."/>
            <person name="Goldman G.H."/>
            <person name="Gomi K."/>
            <person name="Griffith-Jones S."/>
            <person name="Gwilliam R."/>
            <person name="Haas B.J."/>
            <person name="Haas H."/>
            <person name="Harris D.E."/>
            <person name="Horiuchi H."/>
            <person name="Huang J."/>
            <person name="Humphray S."/>
            <person name="Jimenez J."/>
            <person name="Keller N."/>
            <person name="Khouri H."/>
            <person name="Kitamoto K."/>
            <person name="Kobayashi T."/>
            <person name="Konzack S."/>
            <person name="Kulkarni R."/>
            <person name="Kumagai T."/>
            <person name="Lafton A."/>
            <person name="Latge J.-P."/>
            <person name="Li W."/>
            <person name="Lord A."/>
            <person name="Lu C."/>
            <person name="Majoros W.H."/>
            <person name="May G.S."/>
            <person name="Miller B.L."/>
            <person name="Mohamoud Y."/>
            <person name="Molina M."/>
            <person name="Monod M."/>
            <person name="Mouyna I."/>
            <person name="Mulligan S."/>
            <person name="Murphy L.D."/>
            <person name="O'Neil S."/>
            <person name="Paulsen I."/>
            <person name="Penalva M.A."/>
            <person name="Pertea M."/>
            <person name="Price C."/>
            <person name="Pritchard B.L."/>
            <person name="Quail M.A."/>
            <person name="Rabbinowitsch E."/>
            <person name="Rawlins N."/>
            <person name="Rajandream M.A."/>
            <person name="Reichard U."/>
            <person name="Renauld H."/>
            <person name="Robson G.D."/>
            <person name="Rodriguez de Cordoba S."/>
            <person name="Rodriguez-Pena J.M."/>
            <person name="Ronning C.M."/>
            <person name="Rutter S."/>
            <person name="Salzberg S.L."/>
            <person name="Sanchez M."/>
            <person name="Sanchez-Ferrero J.C."/>
            <person name="Saunders D."/>
            <person name="Seeger K."/>
            <person name="Squares R."/>
            <person name="Squares S."/>
            <person name="Takeuchi M."/>
            <person name="Tekaia F."/>
            <person name="Turner G."/>
            <person name="Vazquez de Aldana C.R."/>
            <person name="Weidman J."/>
            <person name="White O."/>
            <person name="Woodward J.R."/>
            <person name="Yu J.-H."/>
            <person name="Fraser C.M."/>
            <person name="Galagan J.E."/>
            <person name="Asai K."/>
            <person name="Machida M."/>
            <person name="Hall N."/>
            <person name="Barrell B.G."/>
            <person name="Denning D.W."/>
        </authorList>
    </citation>
    <scope>NUCLEOTIDE SEQUENCE [LARGE SCALE GENOMIC DNA]</scope>
    <source>
        <strain>ATCC MYA-4609 / CBS 101355 / FGSC A1100 / Af293</strain>
    </source>
</reference>
<protein>
    <recommendedName>
        <fullName>Mitochondrial intermembrane space import and assembly protein 40</fullName>
    </recommendedName>
    <alternativeName>
        <fullName>Mitochondrial import inner membrane translocase TIM40</fullName>
    </alternativeName>
</protein>
<sequence length="297" mass="31948">MFRPATRILLRAPGVAARGPVSRRLISTAPPDAKSRSWKSTIVRLGLAAGAVYYYNTSSVFAEQPSLSFLSKQSTPDSSDETQLPTIDSIKPRIREERQAESKAVSQPDAQPTQHEALSASEAALKSPQELEDEAGQEAAFNPETGEINWDCPCLGGMAHGPCGEEFKAAFSCFVYSTEEPKGMDCIDKFKGMQECFRRYPDVYGAELEDDDEADAAAATAAGVSEPSEQPASPTVSAPTAEIDASSDSEGKEGRAKDVHAQVKSEVAEKAEQAESDDLVPKAWHDTEGTKAQQTEK</sequence>
<evidence type="ECO:0000250" key="1"/>
<evidence type="ECO:0000255" key="2"/>
<evidence type="ECO:0000255" key="3">
    <source>
        <dbReference type="PROSITE-ProRule" id="PRU01150"/>
    </source>
</evidence>
<evidence type="ECO:0000256" key="4">
    <source>
        <dbReference type="SAM" id="MobiDB-lite"/>
    </source>
</evidence>
<keyword id="KW-1015">Disulfide bond</keyword>
<keyword id="KW-0472">Membrane</keyword>
<keyword id="KW-0496">Mitochondrion</keyword>
<keyword id="KW-0999">Mitochondrion inner membrane</keyword>
<keyword id="KW-0560">Oxidoreductase</keyword>
<keyword id="KW-0653">Protein transport</keyword>
<keyword id="KW-0676">Redox-active center</keyword>
<keyword id="KW-1185">Reference proteome</keyword>
<keyword id="KW-0735">Signal-anchor</keyword>
<keyword id="KW-0809">Transit peptide</keyword>
<keyword id="KW-0811">Translocation</keyword>
<keyword id="KW-0812">Transmembrane</keyword>
<keyword id="KW-1133">Transmembrane helix</keyword>
<keyword id="KW-0813">Transport</keyword>
<feature type="transit peptide" description="Mitochondrion" evidence="2">
    <location>
        <begin position="1"/>
        <end position="25"/>
    </location>
</feature>
<feature type="chain" id="PRO_0000235283" description="Mitochondrial intermembrane space import and assembly protein 40">
    <location>
        <begin position="26"/>
        <end position="297"/>
    </location>
</feature>
<feature type="topological domain" description="Mitochondrial matrix" evidence="2">
    <location>
        <begin position="26"/>
        <end position="44"/>
    </location>
</feature>
<feature type="transmembrane region" description="Helical; Signal-anchor for type II membrane protein" evidence="2">
    <location>
        <begin position="45"/>
        <end position="62"/>
    </location>
</feature>
<feature type="topological domain" description="Mitochondrial intermembrane" evidence="2">
    <location>
        <begin position="63"/>
        <end position="297"/>
    </location>
</feature>
<feature type="domain" description="CHCH" evidence="3">
    <location>
        <begin position="160"/>
        <end position="204"/>
    </location>
</feature>
<feature type="region of interest" description="Disordered" evidence="4">
    <location>
        <begin position="70"/>
        <end position="137"/>
    </location>
</feature>
<feature type="region of interest" description="Disordered" evidence="4">
    <location>
        <begin position="208"/>
        <end position="297"/>
    </location>
</feature>
<feature type="short sequence motif" description="Cx9C motif 1" evidence="3">
    <location>
        <begin position="163"/>
        <end position="173"/>
    </location>
</feature>
<feature type="short sequence motif" description="Cx9C motif 2" evidence="3">
    <location>
        <begin position="186"/>
        <end position="196"/>
    </location>
</feature>
<feature type="compositionally biased region" description="Polar residues" evidence="4">
    <location>
        <begin position="70"/>
        <end position="86"/>
    </location>
</feature>
<feature type="compositionally biased region" description="Basic and acidic residues" evidence="4">
    <location>
        <begin position="90"/>
        <end position="101"/>
    </location>
</feature>
<feature type="compositionally biased region" description="Polar residues" evidence="4">
    <location>
        <begin position="104"/>
        <end position="114"/>
    </location>
</feature>
<feature type="compositionally biased region" description="Low complexity" evidence="4">
    <location>
        <begin position="116"/>
        <end position="125"/>
    </location>
</feature>
<feature type="compositionally biased region" description="Polar residues" evidence="4">
    <location>
        <begin position="227"/>
        <end position="238"/>
    </location>
</feature>
<feature type="compositionally biased region" description="Basic and acidic residues" evidence="4">
    <location>
        <begin position="249"/>
        <end position="297"/>
    </location>
</feature>
<feature type="disulfide bond" description="Redox-active" evidence="1">
    <location>
        <begin position="152"/>
        <end position="154"/>
    </location>
</feature>
<feature type="disulfide bond" evidence="3">
    <location>
        <begin position="163"/>
        <end position="196"/>
    </location>
</feature>
<feature type="disulfide bond" evidence="3">
    <location>
        <begin position="173"/>
        <end position="186"/>
    </location>
</feature>